<feature type="chain" id="PRO_0000422305" description="Probable flippase AglR">
    <location>
        <begin position="1"/>
        <end position="476"/>
    </location>
</feature>
<feature type="transmembrane region" description="Helical" evidence="1">
    <location>
        <begin position="7"/>
        <end position="29"/>
    </location>
</feature>
<feature type="transmembrane region" description="Helical" evidence="1">
    <location>
        <begin position="34"/>
        <end position="56"/>
    </location>
</feature>
<feature type="transmembrane region" description="Helical" evidence="1">
    <location>
        <begin position="83"/>
        <end position="103"/>
    </location>
</feature>
<feature type="transmembrane region" description="Helical" evidence="1">
    <location>
        <begin position="112"/>
        <end position="132"/>
    </location>
</feature>
<feature type="transmembrane region" description="Helical" evidence="1">
    <location>
        <begin position="146"/>
        <end position="166"/>
    </location>
</feature>
<feature type="transmembrane region" description="Helical" evidence="1">
    <location>
        <begin position="168"/>
        <end position="188"/>
    </location>
</feature>
<feature type="transmembrane region" description="Helical" evidence="1">
    <location>
        <begin position="222"/>
        <end position="242"/>
    </location>
</feature>
<feature type="transmembrane region" description="Helical" evidence="1">
    <location>
        <begin position="246"/>
        <end position="266"/>
    </location>
</feature>
<feature type="transmembrane region" description="Helical" evidence="1">
    <location>
        <begin position="287"/>
        <end position="307"/>
    </location>
</feature>
<feature type="transmembrane region" description="Helical" evidence="1">
    <location>
        <begin position="310"/>
        <end position="330"/>
    </location>
</feature>
<feature type="transmembrane region" description="Helical" evidence="1">
    <location>
        <begin position="354"/>
        <end position="373"/>
    </location>
</feature>
<feature type="transmembrane region" description="Helical" evidence="1">
    <location>
        <begin position="377"/>
        <end position="396"/>
    </location>
</feature>
<feature type="transmembrane region" description="Helical" evidence="1">
    <location>
        <begin position="409"/>
        <end position="429"/>
    </location>
</feature>
<feature type="transmembrane region" description="Helical" evidence="1">
    <location>
        <begin position="439"/>
        <end position="459"/>
    </location>
</feature>
<sequence length="476" mass="50636">MAKLARASALQFGANVTQTFVGAIITIYVINELGVGAFGIFALSAALVKWASIPAVGIRGAVITRMNESDDISPSEYFTTASVLTGAIILVGLLALLGYSPFVEQYLDYSGTQLVGGMFVSNVSFRLVLGGLRGENRVEMSSLYEALWGILSSLVKLALVYTGVGVDALFYGEITSSIVIGIFGVYSLNISFVSPTRSAAISLYSWARYGWLDNLKRMSYSWLDTIILGFFVSTSLVGIYEVAWRISALFVLLPTAISKSTFPTISSLRDTDKLNKVRRILTRGLSVAGVLAIPGLVGSVLVGGDILALYGPSVSSVGVAVSVLVSLSVVRLVECYETLVMQALNALDLPDRTFRIGVIFITTNIILNVSLIPMFGVIGAAIATLLSMTLGSILAVRALPKAVQTLPPVSAIGSQFVSAGAMAVVLFTILNYRPIGQPIEVVLYVLAGATTYGFVLLSLSSNFRERVQQLLSESLG</sequence>
<accession>D4GYG8</accession>
<accession>B7VU79</accession>
<protein>
    <recommendedName>
        <fullName>Probable flippase AglR</fullName>
    </recommendedName>
    <alternativeName>
        <fullName>Archaeal glycosylation protein R</fullName>
    </alternativeName>
</protein>
<organism>
    <name type="scientific">Haloferax volcanii (strain ATCC 29605 / DSM 3757 / JCM 8879 / NBRC 14742 / NCIMB 2012 / VKM B-1768 / DS2)</name>
    <name type="common">Halobacterium volcanii</name>
    <dbReference type="NCBI Taxonomy" id="309800"/>
    <lineage>
        <taxon>Archaea</taxon>
        <taxon>Methanobacteriati</taxon>
        <taxon>Methanobacteriota</taxon>
        <taxon>Stenosarchaea group</taxon>
        <taxon>Halobacteria</taxon>
        <taxon>Halobacteriales</taxon>
        <taxon>Haloferacaceae</taxon>
        <taxon>Haloferax</taxon>
    </lineage>
</organism>
<name>AGLR_HALVD</name>
<proteinExistence type="evidence at protein level"/>
<reference key="1">
    <citation type="journal article" date="2010" name="PLoS ONE">
        <title>The complete genome sequence of Haloferax volcanii DS2, a model archaeon.</title>
        <authorList>
            <person name="Hartman A.L."/>
            <person name="Norais C."/>
            <person name="Badger J.H."/>
            <person name="Delmas S."/>
            <person name="Haldenby S."/>
            <person name="Madupu R."/>
            <person name="Robinson J."/>
            <person name="Khouri H."/>
            <person name="Ren Q."/>
            <person name="Lowe T.M."/>
            <person name="Maupin-Furlow J."/>
            <person name="Pohlschroder M."/>
            <person name="Daniels C."/>
            <person name="Pfeiffer F."/>
            <person name="Allers T."/>
            <person name="Eisen J.A."/>
        </authorList>
    </citation>
    <scope>NUCLEOTIDE SEQUENCE [LARGE SCALE GENOMIC DNA]</scope>
    <source>
        <strain>ATCC 29605 / DSM 3757 / JCM 8879 / NBRC 14742 / NCIMB 2012 / VKM B-1768 / DS2</strain>
    </source>
</reference>
<reference key="2">
    <citation type="journal article" date="2014" name="PLoS Genet.">
        <title>Phylogenetically driven sequencing of extremely halophilic archaea reveals strategies for static and dynamic osmo-response.</title>
        <authorList>
            <person name="Becker E.A."/>
            <person name="Seitzer P.M."/>
            <person name="Tritt A."/>
            <person name="Larsen D."/>
            <person name="Krusor M."/>
            <person name="Yao A.I."/>
            <person name="Wu D."/>
            <person name="Madern D."/>
            <person name="Eisen J.A."/>
            <person name="Darling A.E."/>
            <person name="Facciotti M.T."/>
        </authorList>
    </citation>
    <scope>NUCLEOTIDE SEQUENCE [LARGE SCALE GENOMIC DNA]</scope>
    <source>
        <strain>ATCC 29605 / DSM 3757 / JCM 8879 / NBRC 14742 / NCIMB 2012 / VKM B-1768 / DS2</strain>
    </source>
</reference>
<reference key="3">
    <citation type="journal article" date="2009" name="J. Bacteriol.">
        <title>Manual annotation, transcriptional analysis, and protein expression studies reveal novel genes in the agl cluster responsible for N glycosylation in the halophilic archaeon Haloferax volcanii.</title>
        <authorList>
            <person name="Yurist-Doutsch S."/>
            <person name="Eichler J."/>
        </authorList>
    </citation>
    <scope>NUCLEOTIDE SEQUENCE [GENOMIC DNA] OF 66-476</scope>
    <scope>GENE NAME</scope>
</reference>
<reference key="4">
    <citation type="journal article" date="2012" name="Biochim. Biophys. Acta">
        <title>AglR is required for addition of the final mannose residue of the N-linked glycan decorating the Haloferax volcanii S-layer glycoprotein.</title>
        <authorList>
            <person name="Kaminski L."/>
            <person name="Guan Z."/>
            <person name="Abu-Qarn M."/>
            <person name="Konrad Z."/>
            <person name="Eichler J."/>
        </authorList>
    </citation>
    <scope>FUNCTION</scope>
    <scope>PATHWAY</scope>
    <scope>DISRUPTION PHENOTYPE</scope>
    <source>
        <strain>H53</strain>
    </source>
</reference>
<reference key="5">
    <citation type="journal article" date="2012" name="J. Bacteriol.">
        <title>N-glycosylation of Haloferax volcanii flagellins requires known Agl proteins and is essential for biosynthesis of stable flagella.</title>
        <authorList>
            <person name="Tripepi M."/>
            <person name="You J."/>
            <person name="Temel S."/>
            <person name="Onder O."/>
            <person name="Brisson D."/>
            <person name="Pohlschroder M."/>
        </authorList>
    </citation>
    <scope>PROBABLE FUNCTION IN GLYCOSYLATION OF FLAGELLINS</scope>
    <source>
        <strain>H53</strain>
    </source>
</reference>
<evidence type="ECO:0000255" key="1"/>
<evidence type="ECO:0000269" key="2">
    <source>
    </source>
</evidence>
<evidence type="ECO:0000305" key="3"/>
<gene>
    <name type="primary">aglR</name>
    <name type="ordered locus">HVO_1524</name>
    <name type="ORF">C498_02975</name>
</gene>
<dbReference type="EMBL" id="CP001956">
    <property type="protein sequence ID" value="ADE03191.1"/>
    <property type="molecule type" value="Genomic_DNA"/>
</dbReference>
<dbReference type="EMBL" id="AOHU01000027">
    <property type="protein sequence ID" value="ELY35859.1"/>
    <property type="molecule type" value="Genomic_DNA"/>
</dbReference>
<dbReference type="EMBL" id="FM955371">
    <property type="protein sequence ID" value="CAW30729.1"/>
    <property type="molecule type" value="Genomic_DNA"/>
</dbReference>
<dbReference type="RefSeq" id="WP_004041402.1">
    <property type="nucleotide sequence ID" value="NC_013967.1"/>
</dbReference>
<dbReference type="SMR" id="D4GYG8"/>
<dbReference type="STRING" id="309800.HVO_1524"/>
<dbReference type="PaxDb" id="309800-C498_02975"/>
<dbReference type="EnsemblBacteria" id="ADE03191">
    <property type="protein sequence ID" value="ADE03191"/>
    <property type="gene ID" value="HVO_1524"/>
</dbReference>
<dbReference type="GeneID" id="31787475"/>
<dbReference type="KEGG" id="hvo:HVO_1524"/>
<dbReference type="PATRIC" id="fig|309800.29.peg.571"/>
<dbReference type="eggNOG" id="arCOG02209">
    <property type="taxonomic scope" value="Archaea"/>
</dbReference>
<dbReference type="HOGENOM" id="CLU_043240_0_0_2"/>
<dbReference type="OrthoDB" id="112053at2157"/>
<dbReference type="UniPathway" id="UPA00977"/>
<dbReference type="Proteomes" id="UP000008243">
    <property type="component" value="Chromosome"/>
</dbReference>
<dbReference type="Proteomes" id="UP000011532">
    <property type="component" value="Unassembled WGS sequence"/>
</dbReference>
<dbReference type="GO" id="GO:0005886">
    <property type="term" value="C:plasma membrane"/>
    <property type="evidence" value="ECO:0007669"/>
    <property type="project" value="UniProtKB-SubCell"/>
</dbReference>
<dbReference type="GO" id="GO:0045232">
    <property type="term" value="P:S-layer organization"/>
    <property type="evidence" value="ECO:0007669"/>
    <property type="project" value="UniProtKB-UniPathway"/>
</dbReference>
<dbReference type="InterPro" id="IPR050833">
    <property type="entry name" value="Poly_Biosynth_Transport"/>
</dbReference>
<dbReference type="PANTHER" id="PTHR30250:SF28">
    <property type="entry name" value="POLYSACCHARIDE BIOSYNTHESIS PROTEIN"/>
    <property type="match status" value="1"/>
</dbReference>
<dbReference type="PANTHER" id="PTHR30250">
    <property type="entry name" value="PST FAMILY PREDICTED COLANIC ACID TRANSPORTER"/>
    <property type="match status" value="1"/>
</dbReference>
<dbReference type="Pfam" id="PF13440">
    <property type="entry name" value="Polysacc_synt_3"/>
    <property type="match status" value="1"/>
</dbReference>
<keyword id="KW-1003">Cell membrane</keyword>
<keyword id="KW-0472">Membrane</keyword>
<keyword id="KW-1185">Reference proteome</keyword>
<keyword id="KW-0812">Transmembrane</keyword>
<keyword id="KW-1133">Transmembrane helix</keyword>
<comment type="function">
    <text evidence="2">Involved in the assembly of a N-linked pentasaccharide that decorates the S-layer glycoprotein and flagellins. Probably mediates or contributes to the translocation of the dolichol-phosphate-mannose across the membrane.</text>
</comment>
<comment type="pathway">
    <text evidence="2">Cell surface structure biogenesis; S-layer biogenesis.</text>
</comment>
<comment type="subcellular location">
    <subcellularLocation>
        <location evidence="3">Cell membrane</location>
        <topology evidence="3">Multi-pass membrane protein</topology>
    </subcellularLocation>
</comment>
<comment type="disruption phenotype">
    <text evidence="2">Mutants show accumulation of both tetrasaccharide- and mannose-linked dolichol phosphate. The final mannose residue of the N-linked glycan decorating the S-layer glycoprotein is not added.</text>
</comment>
<comment type="similarity">
    <text evidence="3">Belongs to the AglR/Agl15 family.</text>
</comment>